<comment type="function">
    <text>Clathrin is the major protein of the polyhedral coat of coated pits and vesicles.</text>
</comment>
<comment type="subunit">
    <text evidence="1">Clathrin coats are formed from molecules containing 3 heavy chains and 3 light chains.</text>
</comment>
<comment type="subcellular location">
    <subcellularLocation>
        <location evidence="1">Cytoplasmic vesicle membrane</location>
        <topology evidence="1">Peripheral membrane protein</topology>
        <orientation evidence="1">Cytoplasmic side</orientation>
    </subcellularLocation>
    <subcellularLocation>
        <location evidence="1">Membrane</location>
        <location evidence="1">Coated pit</location>
        <topology evidence="1">Peripheral membrane protein</topology>
        <orientation evidence="1">Cytoplasmic side</orientation>
    </subcellularLocation>
    <text evidence="1">Cytoplasmic face of coated pits and vesicles.</text>
</comment>
<comment type="similarity">
    <text evidence="4">Belongs to the clathrin light chain family.</text>
</comment>
<feature type="chain" id="PRO_0000413946" description="Clathrin light chain 1">
    <location>
        <begin position="1"/>
        <end position="338"/>
    </location>
</feature>
<feature type="region of interest" description="Disordered" evidence="3">
    <location>
        <begin position="1"/>
        <end position="111"/>
    </location>
</feature>
<feature type="region of interest" description="Involved in binding clathrin heavy chain" evidence="1">
    <location>
        <begin position="102"/>
        <end position="163"/>
    </location>
</feature>
<feature type="region of interest" description="Disordered" evidence="3">
    <location>
        <begin position="192"/>
        <end position="338"/>
    </location>
</feature>
<feature type="coiled-coil region" evidence="2">
    <location>
        <begin position="122"/>
        <end position="142"/>
    </location>
</feature>
<feature type="compositionally biased region" description="Polar residues" evidence="3">
    <location>
        <begin position="29"/>
        <end position="47"/>
    </location>
</feature>
<feature type="compositionally biased region" description="Polar residues" evidence="3">
    <location>
        <begin position="61"/>
        <end position="73"/>
    </location>
</feature>
<feature type="compositionally biased region" description="Basic and acidic residues" evidence="3">
    <location>
        <begin position="102"/>
        <end position="111"/>
    </location>
</feature>
<feature type="compositionally biased region" description="Basic and acidic residues" evidence="3">
    <location>
        <begin position="197"/>
        <end position="212"/>
    </location>
</feature>
<feature type="compositionally biased region" description="Pro residues" evidence="3">
    <location>
        <begin position="241"/>
        <end position="253"/>
    </location>
</feature>
<feature type="compositionally biased region" description="Basic and acidic residues" evidence="3">
    <location>
        <begin position="254"/>
        <end position="304"/>
    </location>
</feature>
<feature type="sequence conflict" description="In Ref. 5; AAM61043." evidence="4" ref="5">
    <original>T</original>
    <variation>A</variation>
    <location>
        <position position="270"/>
    </location>
</feature>
<reference key="1">
    <citation type="journal article" date="1999" name="Nature">
        <title>Sequence and analysis of chromosome 2 of the plant Arabidopsis thaliana.</title>
        <authorList>
            <person name="Lin X."/>
            <person name="Kaul S."/>
            <person name="Rounsley S.D."/>
            <person name="Shea T.P."/>
            <person name="Benito M.-I."/>
            <person name="Town C.D."/>
            <person name="Fujii C.Y."/>
            <person name="Mason T.M."/>
            <person name="Bowman C.L."/>
            <person name="Barnstead M.E."/>
            <person name="Feldblyum T.V."/>
            <person name="Buell C.R."/>
            <person name="Ketchum K.A."/>
            <person name="Lee J.J."/>
            <person name="Ronning C.M."/>
            <person name="Koo H.L."/>
            <person name="Moffat K.S."/>
            <person name="Cronin L.A."/>
            <person name="Shen M."/>
            <person name="Pai G."/>
            <person name="Van Aken S."/>
            <person name="Umayam L."/>
            <person name="Tallon L.J."/>
            <person name="Gill J.E."/>
            <person name="Adams M.D."/>
            <person name="Carrera A.J."/>
            <person name="Creasy T.H."/>
            <person name="Goodman H.M."/>
            <person name="Somerville C.R."/>
            <person name="Copenhaver G.P."/>
            <person name="Preuss D."/>
            <person name="Nierman W.C."/>
            <person name="White O."/>
            <person name="Eisen J.A."/>
            <person name="Salzberg S.L."/>
            <person name="Fraser C.M."/>
            <person name="Venter J.C."/>
        </authorList>
    </citation>
    <scope>NUCLEOTIDE SEQUENCE [LARGE SCALE GENOMIC DNA]</scope>
    <source>
        <strain>cv. Columbia</strain>
    </source>
</reference>
<reference key="2">
    <citation type="journal article" date="2017" name="Plant J.">
        <title>Araport11: a complete reannotation of the Arabidopsis thaliana reference genome.</title>
        <authorList>
            <person name="Cheng C.Y."/>
            <person name="Krishnakumar V."/>
            <person name="Chan A.P."/>
            <person name="Thibaud-Nissen F."/>
            <person name="Schobel S."/>
            <person name="Town C.D."/>
        </authorList>
    </citation>
    <scope>GENOME REANNOTATION</scope>
    <source>
        <strain>cv. Columbia</strain>
    </source>
</reference>
<reference key="3">
    <citation type="journal article" date="2003" name="Science">
        <title>Empirical analysis of transcriptional activity in the Arabidopsis genome.</title>
        <authorList>
            <person name="Yamada K."/>
            <person name="Lim J."/>
            <person name="Dale J.M."/>
            <person name="Chen H."/>
            <person name="Shinn P."/>
            <person name="Palm C.J."/>
            <person name="Southwick A.M."/>
            <person name="Wu H.C."/>
            <person name="Kim C.J."/>
            <person name="Nguyen M."/>
            <person name="Pham P.K."/>
            <person name="Cheuk R.F."/>
            <person name="Karlin-Newmann G."/>
            <person name="Liu S.X."/>
            <person name="Lam B."/>
            <person name="Sakano H."/>
            <person name="Wu T."/>
            <person name="Yu G."/>
            <person name="Miranda M."/>
            <person name="Quach H.L."/>
            <person name="Tripp M."/>
            <person name="Chang C.H."/>
            <person name="Lee J.M."/>
            <person name="Toriumi M.J."/>
            <person name="Chan M.M."/>
            <person name="Tang C.C."/>
            <person name="Onodera C.S."/>
            <person name="Deng J.M."/>
            <person name="Akiyama K."/>
            <person name="Ansari Y."/>
            <person name="Arakawa T."/>
            <person name="Banh J."/>
            <person name="Banno F."/>
            <person name="Bowser L."/>
            <person name="Brooks S.Y."/>
            <person name="Carninci P."/>
            <person name="Chao Q."/>
            <person name="Choy N."/>
            <person name="Enju A."/>
            <person name="Goldsmith A.D."/>
            <person name="Gurjal M."/>
            <person name="Hansen N.F."/>
            <person name="Hayashizaki Y."/>
            <person name="Johnson-Hopson C."/>
            <person name="Hsuan V.W."/>
            <person name="Iida K."/>
            <person name="Karnes M."/>
            <person name="Khan S."/>
            <person name="Koesema E."/>
            <person name="Ishida J."/>
            <person name="Jiang P.X."/>
            <person name="Jones T."/>
            <person name="Kawai J."/>
            <person name="Kamiya A."/>
            <person name="Meyers C."/>
            <person name="Nakajima M."/>
            <person name="Narusaka M."/>
            <person name="Seki M."/>
            <person name="Sakurai T."/>
            <person name="Satou M."/>
            <person name="Tamse R."/>
            <person name="Vaysberg M."/>
            <person name="Wallender E.K."/>
            <person name="Wong C."/>
            <person name="Yamamura Y."/>
            <person name="Yuan S."/>
            <person name="Shinozaki K."/>
            <person name="Davis R.W."/>
            <person name="Theologis A."/>
            <person name="Ecker J.R."/>
        </authorList>
    </citation>
    <scope>NUCLEOTIDE SEQUENCE [LARGE SCALE MRNA]</scope>
    <source>
        <strain>cv. Columbia</strain>
    </source>
</reference>
<reference key="4">
    <citation type="submission" date="2006-06" db="EMBL/GenBank/DDBJ databases">
        <title>Arabidopsis ORF clones.</title>
        <authorList>
            <person name="Quinitio C."/>
            <person name="Chen H."/>
            <person name="Kim C.J."/>
            <person name="Shinn P."/>
            <person name="Ecker J.R."/>
        </authorList>
    </citation>
    <scope>NUCLEOTIDE SEQUENCE [LARGE SCALE MRNA]</scope>
    <source>
        <strain>cv. Columbia</strain>
    </source>
</reference>
<reference key="5">
    <citation type="submission" date="2002-03" db="EMBL/GenBank/DDBJ databases">
        <title>Full-length cDNA from Arabidopsis thaliana.</title>
        <authorList>
            <person name="Brover V.V."/>
            <person name="Troukhan M.E."/>
            <person name="Alexandrov N.A."/>
            <person name="Lu Y.-P."/>
            <person name="Flavell R.B."/>
            <person name="Feldmann K.A."/>
        </authorList>
    </citation>
    <scope>NUCLEOTIDE SEQUENCE [LARGE SCALE MRNA]</scope>
</reference>
<evidence type="ECO:0000250" key="1"/>
<evidence type="ECO:0000255" key="2"/>
<evidence type="ECO:0000256" key="3">
    <source>
        <dbReference type="SAM" id="MobiDB-lite"/>
    </source>
</evidence>
<evidence type="ECO:0000305" key="4"/>
<sequence>MATFDDGDFPAQTHSPSEHEDFGGYDNFSEAQQPPTQHQSGGFSSFNGDPASPNGYGFGASSPNHDFSSPFESSVNDANGNGGGSGGDAIFASDGPILPDPNEMREEGFQRREWRRLNTIHLEEKEKKEKEMRNQIITEAEDFKKAFYEKRDKTIETNKTDNREKEKLYWANQEKFHKEVDKHYWKAIAELIPREVPNIEKKRGKKDPDKKPSVNVIQGPKPGKPTDLGRMRQIFLKLKTNPPPHMMPPPPPAKDAKDGKDAKDGKDAKTGKDGKDAKGGKDAKDLKDGKPADPKVTEEKRPSPAKDASVETAKPDAAASGEGEKPVAVTEAEGTKAE</sequence>
<accession>Q9SKU1</accession>
<accession>Q8LG44</accession>
<protein>
    <recommendedName>
        <fullName>Clathrin light chain 1</fullName>
    </recommendedName>
</protein>
<organism>
    <name type="scientific">Arabidopsis thaliana</name>
    <name type="common">Mouse-ear cress</name>
    <dbReference type="NCBI Taxonomy" id="3702"/>
    <lineage>
        <taxon>Eukaryota</taxon>
        <taxon>Viridiplantae</taxon>
        <taxon>Streptophyta</taxon>
        <taxon>Embryophyta</taxon>
        <taxon>Tracheophyta</taxon>
        <taxon>Spermatophyta</taxon>
        <taxon>Magnoliopsida</taxon>
        <taxon>eudicotyledons</taxon>
        <taxon>Gunneridae</taxon>
        <taxon>Pentapetalae</taxon>
        <taxon>rosids</taxon>
        <taxon>malvids</taxon>
        <taxon>Brassicales</taxon>
        <taxon>Brassicaceae</taxon>
        <taxon>Camelineae</taxon>
        <taxon>Arabidopsis</taxon>
    </lineage>
</organism>
<dbReference type="EMBL" id="AC006234">
    <property type="protein sequence ID" value="AAD20919.1"/>
    <property type="molecule type" value="Genomic_DNA"/>
</dbReference>
<dbReference type="EMBL" id="CP002685">
    <property type="protein sequence ID" value="AEC07067.1"/>
    <property type="molecule type" value="Genomic_DNA"/>
</dbReference>
<dbReference type="EMBL" id="AY057515">
    <property type="protein sequence ID" value="AAL09756.1"/>
    <property type="molecule type" value="mRNA"/>
</dbReference>
<dbReference type="EMBL" id="AY057654">
    <property type="protein sequence ID" value="AAL15285.1"/>
    <property type="molecule type" value="mRNA"/>
</dbReference>
<dbReference type="EMBL" id="BT025885">
    <property type="protein sequence ID" value="ABF85787.1"/>
    <property type="molecule type" value="mRNA"/>
</dbReference>
<dbReference type="EMBL" id="AY084472">
    <property type="protein sequence ID" value="AAM61043.1"/>
    <property type="molecule type" value="mRNA"/>
</dbReference>
<dbReference type="PIR" id="A84593">
    <property type="entry name" value="A84593"/>
</dbReference>
<dbReference type="RefSeq" id="NP_565484.1">
    <property type="nucleotide sequence ID" value="NM_127641.4"/>
</dbReference>
<dbReference type="SMR" id="Q9SKU1"/>
<dbReference type="BioGRID" id="1958">
    <property type="interactions" value="6"/>
</dbReference>
<dbReference type="FunCoup" id="Q9SKU1">
    <property type="interactions" value="3854"/>
</dbReference>
<dbReference type="IntAct" id="Q9SKU1">
    <property type="interactions" value="1"/>
</dbReference>
<dbReference type="STRING" id="3702.Q9SKU1"/>
<dbReference type="iPTMnet" id="Q9SKU1"/>
<dbReference type="PaxDb" id="3702-AT2G20760.1"/>
<dbReference type="ProteomicsDB" id="246877"/>
<dbReference type="EnsemblPlants" id="AT2G20760.1">
    <property type="protein sequence ID" value="AT2G20760.1"/>
    <property type="gene ID" value="AT2G20760"/>
</dbReference>
<dbReference type="GeneID" id="816605"/>
<dbReference type="Gramene" id="AT2G20760.1">
    <property type="protein sequence ID" value="AT2G20760.1"/>
    <property type="gene ID" value="AT2G20760"/>
</dbReference>
<dbReference type="KEGG" id="ath:AT2G20760"/>
<dbReference type="Araport" id="AT2G20760"/>
<dbReference type="TAIR" id="AT2G20760">
    <property type="gene designation" value="CLC1"/>
</dbReference>
<dbReference type="eggNOG" id="ENOG502QVX7">
    <property type="taxonomic scope" value="Eukaryota"/>
</dbReference>
<dbReference type="HOGENOM" id="CLU_053778_2_0_1"/>
<dbReference type="InParanoid" id="Q9SKU1"/>
<dbReference type="OMA" id="FYEKRTQ"/>
<dbReference type="PhylomeDB" id="Q9SKU1"/>
<dbReference type="PRO" id="PR:Q9SKU1"/>
<dbReference type="Proteomes" id="UP000006548">
    <property type="component" value="Chromosome 2"/>
</dbReference>
<dbReference type="ExpressionAtlas" id="Q9SKU1">
    <property type="expression patterns" value="baseline and differential"/>
</dbReference>
<dbReference type="GO" id="GO:0030132">
    <property type="term" value="C:clathrin coat of coated pit"/>
    <property type="evidence" value="ECO:0007669"/>
    <property type="project" value="InterPro"/>
</dbReference>
<dbReference type="GO" id="GO:0030130">
    <property type="term" value="C:clathrin coat of trans-Golgi network vesicle"/>
    <property type="evidence" value="ECO:0007669"/>
    <property type="project" value="InterPro"/>
</dbReference>
<dbReference type="GO" id="GO:0005829">
    <property type="term" value="C:cytosol"/>
    <property type="evidence" value="ECO:0007005"/>
    <property type="project" value="TAIR"/>
</dbReference>
<dbReference type="GO" id="GO:0005739">
    <property type="term" value="C:mitochondrion"/>
    <property type="evidence" value="ECO:0007005"/>
    <property type="project" value="TAIR"/>
</dbReference>
<dbReference type="GO" id="GO:0005198">
    <property type="term" value="F:structural molecule activity"/>
    <property type="evidence" value="ECO:0007669"/>
    <property type="project" value="InterPro"/>
</dbReference>
<dbReference type="GO" id="GO:0072583">
    <property type="term" value="P:clathrin-dependent endocytosis"/>
    <property type="evidence" value="ECO:0000353"/>
    <property type="project" value="TAIR"/>
</dbReference>
<dbReference type="GO" id="GO:0006886">
    <property type="term" value="P:intracellular protein transport"/>
    <property type="evidence" value="ECO:0007669"/>
    <property type="project" value="InterPro"/>
</dbReference>
<dbReference type="InterPro" id="IPR000996">
    <property type="entry name" value="Clathrin_L-chain"/>
</dbReference>
<dbReference type="PANTHER" id="PTHR10639">
    <property type="entry name" value="CLATHRIN LIGHT CHAIN"/>
    <property type="match status" value="1"/>
</dbReference>
<dbReference type="PANTHER" id="PTHR10639:SF33">
    <property type="entry name" value="CLATHRIN LIGHT CHAIN 1"/>
    <property type="match status" value="1"/>
</dbReference>
<dbReference type="Pfam" id="PF01086">
    <property type="entry name" value="Clathrin_lg_ch"/>
    <property type="match status" value="1"/>
</dbReference>
<proteinExistence type="evidence at transcript level"/>
<keyword id="KW-0168">Coated pit</keyword>
<keyword id="KW-0175">Coiled coil</keyword>
<keyword id="KW-0968">Cytoplasmic vesicle</keyword>
<keyword id="KW-0472">Membrane</keyword>
<keyword id="KW-1185">Reference proteome</keyword>
<gene>
    <name type="ordered locus">At2g20760</name>
    <name type="ORF">F5H14.27</name>
</gene>
<name>CLC1_ARATH</name>